<name>NUDK_SHIF8</name>
<keyword id="KW-0378">Hydrolase</keyword>
<keyword id="KW-0460">Magnesium</keyword>
<keyword id="KW-0479">Metal-binding</keyword>
<accession>Q0T250</accession>
<gene>
    <name type="primary">nudK</name>
    <name type="ordered locus">SFV_2511</name>
</gene>
<reference key="1">
    <citation type="journal article" date="2006" name="BMC Genomics">
        <title>Complete genome sequence of Shigella flexneri 5b and comparison with Shigella flexneri 2a.</title>
        <authorList>
            <person name="Nie H."/>
            <person name="Yang F."/>
            <person name="Zhang X."/>
            <person name="Yang J."/>
            <person name="Chen L."/>
            <person name="Wang J."/>
            <person name="Xiong Z."/>
            <person name="Peng J."/>
            <person name="Sun L."/>
            <person name="Dong J."/>
            <person name="Xue Y."/>
            <person name="Xu X."/>
            <person name="Chen S."/>
            <person name="Yao Z."/>
            <person name="Shen Y."/>
            <person name="Jin Q."/>
        </authorList>
    </citation>
    <scope>NUCLEOTIDE SEQUENCE [LARGE SCALE GENOMIC DNA]</scope>
    <source>
        <strain>8401</strain>
    </source>
</reference>
<feature type="chain" id="PRO_0000342503" description="GDP-mannose pyrophosphatase">
    <location>
        <begin position="1"/>
        <end position="191"/>
    </location>
</feature>
<feature type="domain" description="Nudix hydrolase" evidence="2">
    <location>
        <begin position="43"/>
        <end position="180"/>
    </location>
</feature>
<feature type="short sequence motif" description="Nudix box">
    <location>
        <begin position="86"/>
        <end position="106"/>
    </location>
</feature>
<feature type="binding site" description="in other chain" evidence="1">
    <location>
        <position position="17"/>
    </location>
    <ligand>
        <name>GDP-alpha-D-mannose</name>
        <dbReference type="ChEBI" id="CHEBI:57527"/>
        <note>ligand shared between dimeric partners</note>
    </ligand>
</feature>
<feature type="binding site" evidence="1">
    <location>
        <begin position="38"/>
        <end position="40"/>
    </location>
    <ligand>
        <name>GDP-alpha-D-mannose</name>
        <dbReference type="ChEBI" id="CHEBI:57527"/>
        <note>ligand shared between dimeric partners</note>
    </ligand>
</feature>
<feature type="binding site" description="in other chain" evidence="1">
    <location>
        <position position="67"/>
    </location>
    <ligand>
        <name>GDP-alpha-D-mannose</name>
        <dbReference type="ChEBI" id="CHEBI:57527"/>
        <note>ligand shared between dimeric partners</note>
    </ligand>
</feature>
<feature type="binding site" description="in other chain" evidence="1">
    <location>
        <begin position="85"/>
        <end position="87"/>
    </location>
    <ligand>
        <name>GDP-alpha-D-mannose</name>
        <dbReference type="ChEBI" id="CHEBI:57527"/>
        <note>ligand shared between dimeric partners</note>
    </ligand>
</feature>
<feature type="binding site" evidence="1">
    <location>
        <position position="85"/>
    </location>
    <ligand>
        <name>Mg(2+)</name>
        <dbReference type="ChEBI" id="CHEBI:18420"/>
        <label>1</label>
    </ligand>
</feature>
<feature type="binding site" evidence="1">
    <location>
        <position position="100"/>
    </location>
    <ligand>
        <name>Mg(2+)</name>
        <dbReference type="ChEBI" id="CHEBI:18420"/>
        <label>2</label>
    </ligand>
</feature>
<feature type="binding site" description="in other chain" evidence="1">
    <location>
        <position position="104"/>
    </location>
    <ligand>
        <name>GDP-alpha-D-mannose</name>
        <dbReference type="ChEBI" id="CHEBI:57527"/>
        <note>ligand shared between dimeric partners</note>
    </ligand>
</feature>
<feature type="binding site" evidence="1">
    <location>
        <position position="104"/>
    </location>
    <ligand>
        <name>Mg(2+)</name>
        <dbReference type="ChEBI" id="CHEBI:18420"/>
        <label>1</label>
    </ligand>
</feature>
<feature type="binding site" evidence="1">
    <location>
        <position position="104"/>
    </location>
    <ligand>
        <name>Mg(2+)</name>
        <dbReference type="ChEBI" id="CHEBI:18420"/>
        <label>2</label>
    </ligand>
</feature>
<feature type="binding site" description="in other chain" evidence="1">
    <location>
        <position position="127"/>
    </location>
    <ligand>
        <name>GDP-alpha-D-mannose</name>
        <dbReference type="ChEBI" id="CHEBI:57527"/>
        <note>ligand shared between dimeric partners</note>
    </ligand>
</feature>
<feature type="binding site" description="in other chain" evidence="1">
    <location>
        <begin position="150"/>
        <end position="151"/>
    </location>
    <ligand>
        <name>GDP-alpha-D-mannose</name>
        <dbReference type="ChEBI" id="CHEBI:57527"/>
        <note>ligand shared between dimeric partners</note>
    </ligand>
</feature>
<feature type="binding site" evidence="1">
    <location>
        <position position="151"/>
    </location>
    <ligand>
        <name>Mg(2+)</name>
        <dbReference type="ChEBI" id="CHEBI:18420"/>
        <label>2</label>
    </ligand>
</feature>
<feature type="binding site" description="in other chain" evidence="1">
    <location>
        <position position="176"/>
    </location>
    <ligand>
        <name>GDP-alpha-D-mannose</name>
        <dbReference type="ChEBI" id="CHEBI:57527"/>
        <note>ligand shared between dimeric partners</note>
    </ligand>
</feature>
<proteinExistence type="inferred from homology"/>
<sequence length="191" mass="21749">MTQQITLIKDKILSDNYFTLHNITYDLTRKDGEVIRHKREVYDRGNGATILLYNAKKKSVVLIRQFRVATWVNGNESGQLIETCAGLLDNDEPEVCIRKEAIEETGYEVGEVRKLFELYMSPGGVTELIHFFIAEYSDNQRANAGGGVEDEDIEVLELPFSQALEMIKTGEIRDGKTVLLLNYLQMSHLMD</sequence>
<organism>
    <name type="scientific">Shigella flexneri serotype 5b (strain 8401)</name>
    <dbReference type="NCBI Taxonomy" id="373384"/>
    <lineage>
        <taxon>Bacteria</taxon>
        <taxon>Pseudomonadati</taxon>
        <taxon>Pseudomonadota</taxon>
        <taxon>Gammaproteobacteria</taxon>
        <taxon>Enterobacterales</taxon>
        <taxon>Enterobacteriaceae</taxon>
        <taxon>Shigella</taxon>
    </lineage>
</organism>
<evidence type="ECO:0000250" key="1">
    <source>
        <dbReference type="UniProtKB" id="P37128"/>
    </source>
</evidence>
<evidence type="ECO:0000255" key="2">
    <source>
        <dbReference type="PROSITE-ProRule" id="PRU00794"/>
    </source>
</evidence>
<evidence type="ECO:0000305" key="3"/>
<comment type="function">
    <text evidence="1">Nucleoside diphosphate sugar hydrolase that hydrolyzes GDP-mannose as its preferred substrate, yielding GMP and mannose-1-phosphate.</text>
</comment>
<comment type="catalytic activity">
    <reaction evidence="1">
        <text>GDP-alpha-D-mannose + H2O = alpha-D-mannose 1-phosphate + GMP + 2 H(+)</text>
        <dbReference type="Rhea" id="RHEA:27978"/>
        <dbReference type="ChEBI" id="CHEBI:15377"/>
        <dbReference type="ChEBI" id="CHEBI:15378"/>
        <dbReference type="ChEBI" id="CHEBI:57527"/>
        <dbReference type="ChEBI" id="CHEBI:58115"/>
        <dbReference type="ChEBI" id="CHEBI:58409"/>
    </reaction>
</comment>
<comment type="cofactor">
    <cofactor evidence="1">
        <name>Mg(2+)</name>
        <dbReference type="ChEBI" id="CHEBI:18420"/>
    </cofactor>
</comment>
<comment type="subunit">
    <text evidence="1">Homodimer.</text>
</comment>
<comment type="domain">
    <text evidence="1">In the dimer, the N-terminal domains are swapped between the two monomers, such that residues of both chains contribute to the active site.</text>
</comment>
<comment type="similarity">
    <text evidence="3">Belongs to the Nudix hydrolase family. NudK subfamily.</text>
</comment>
<dbReference type="EC" id="3.6.1.-" evidence="1"/>
<dbReference type="EMBL" id="CP000266">
    <property type="protein sequence ID" value="ABF04615.1"/>
    <property type="molecule type" value="Genomic_DNA"/>
</dbReference>
<dbReference type="RefSeq" id="WP_001325569.1">
    <property type="nucleotide sequence ID" value="NC_008258.1"/>
</dbReference>
<dbReference type="SMR" id="Q0T250"/>
<dbReference type="KEGG" id="sfv:SFV_2511"/>
<dbReference type="HOGENOM" id="CLU_062658_6_0_6"/>
<dbReference type="Proteomes" id="UP000000659">
    <property type="component" value="Chromosome"/>
</dbReference>
<dbReference type="GO" id="GO:0005829">
    <property type="term" value="C:cytosol"/>
    <property type="evidence" value="ECO:0007669"/>
    <property type="project" value="TreeGrafter"/>
</dbReference>
<dbReference type="GO" id="GO:0016818">
    <property type="term" value="F:hydrolase activity, acting on acid anhydrides, in phosphorus-containing anhydrides"/>
    <property type="evidence" value="ECO:0007669"/>
    <property type="project" value="InterPro"/>
</dbReference>
<dbReference type="GO" id="GO:0046872">
    <property type="term" value="F:metal ion binding"/>
    <property type="evidence" value="ECO:0007669"/>
    <property type="project" value="UniProtKB-KW"/>
</dbReference>
<dbReference type="GO" id="GO:0006753">
    <property type="term" value="P:nucleoside phosphate metabolic process"/>
    <property type="evidence" value="ECO:0007669"/>
    <property type="project" value="TreeGrafter"/>
</dbReference>
<dbReference type="GO" id="GO:0019693">
    <property type="term" value="P:ribose phosphate metabolic process"/>
    <property type="evidence" value="ECO:0007669"/>
    <property type="project" value="TreeGrafter"/>
</dbReference>
<dbReference type="CDD" id="cd24157">
    <property type="entry name" value="NUDIX_GDPMK"/>
    <property type="match status" value="1"/>
</dbReference>
<dbReference type="FunFam" id="3.90.79.10:FF:000010">
    <property type="entry name" value="GDP-mannose pyrophosphatase NudK"/>
    <property type="match status" value="1"/>
</dbReference>
<dbReference type="Gene3D" id="3.90.79.10">
    <property type="entry name" value="Nucleoside Triphosphate Pyrophosphohydrolase"/>
    <property type="match status" value="1"/>
</dbReference>
<dbReference type="InterPro" id="IPR004385">
    <property type="entry name" value="NDP_pyrophosphatase"/>
</dbReference>
<dbReference type="InterPro" id="IPR015797">
    <property type="entry name" value="NUDIX_hydrolase-like_dom_sf"/>
</dbReference>
<dbReference type="InterPro" id="IPR000086">
    <property type="entry name" value="NUDIX_hydrolase_dom"/>
</dbReference>
<dbReference type="NCBIfam" id="TIGR00052">
    <property type="entry name" value="nudix-type nucleoside diphosphatase, YffH/AdpP family"/>
    <property type="match status" value="1"/>
</dbReference>
<dbReference type="NCBIfam" id="NF011585">
    <property type="entry name" value="PRK15009.1"/>
    <property type="match status" value="1"/>
</dbReference>
<dbReference type="PANTHER" id="PTHR11839:SF18">
    <property type="entry name" value="NUDIX HYDROLASE DOMAIN-CONTAINING PROTEIN"/>
    <property type="match status" value="1"/>
</dbReference>
<dbReference type="PANTHER" id="PTHR11839">
    <property type="entry name" value="UDP/ADP-SUGAR PYROPHOSPHATASE"/>
    <property type="match status" value="1"/>
</dbReference>
<dbReference type="Pfam" id="PF00293">
    <property type="entry name" value="NUDIX"/>
    <property type="match status" value="1"/>
</dbReference>
<dbReference type="SUPFAM" id="SSF55811">
    <property type="entry name" value="Nudix"/>
    <property type="match status" value="1"/>
</dbReference>
<dbReference type="PROSITE" id="PS51462">
    <property type="entry name" value="NUDIX"/>
    <property type="match status" value="1"/>
</dbReference>
<protein>
    <recommendedName>
        <fullName>GDP-mannose pyrophosphatase</fullName>
        <ecNumber evidence="1">3.6.1.-</ecNumber>
    </recommendedName>
    <alternativeName>
        <fullName>GDP-mannose hydrolase</fullName>
    </alternativeName>
    <alternativeName>
        <fullName>GDPMK</fullName>
    </alternativeName>
</protein>